<accession>B4E5C9</accession>
<protein>
    <recommendedName>
        <fullName evidence="1">Small ribosomal subunit protein uS17</fullName>
    </recommendedName>
    <alternativeName>
        <fullName evidence="2">30S ribosomal protein S17</fullName>
    </alternativeName>
</protein>
<name>RS17_BURCJ</name>
<sequence length="90" mass="10321">MNDSVKTSLKRTLVGRVVSNKMDKTVTVLIEHRVKHPIYGKYVVRSKKYHAHDEANTYNEGDLVEIQETRPVSKTKAWTVSRLVEAARVI</sequence>
<reference key="1">
    <citation type="journal article" date="2009" name="J. Bacteriol.">
        <title>The genome of Burkholderia cenocepacia J2315, an epidemic pathogen of cystic fibrosis patients.</title>
        <authorList>
            <person name="Holden M.T."/>
            <person name="Seth-Smith H.M."/>
            <person name="Crossman L.C."/>
            <person name="Sebaihia M."/>
            <person name="Bentley S.D."/>
            <person name="Cerdeno-Tarraga A.M."/>
            <person name="Thomson N.R."/>
            <person name="Bason N."/>
            <person name="Quail M.A."/>
            <person name="Sharp S."/>
            <person name="Cherevach I."/>
            <person name="Churcher C."/>
            <person name="Goodhead I."/>
            <person name="Hauser H."/>
            <person name="Holroyd N."/>
            <person name="Mungall K."/>
            <person name="Scott P."/>
            <person name="Walker D."/>
            <person name="White B."/>
            <person name="Rose H."/>
            <person name="Iversen P."/>
            <person name="Mil-Homens D."/>
            <person name="Rocha E.P."/>
            <person name="Fialho A.M."/>
            <person name="Baldwin A."/>
            <person name="Dowson C."/>
            <person name="Barrell B.G."/>
            <person name="Govan J.R."/>
            <person name="Vandamme P."/>
            <person name="Hart C.A."/>
            <person name="Mahenthiralingam E."/>
            <person name="Parkhill J."/>
        </authorList>
    </citation>
    <scope>NUCLEOTIDE SEQUENCE [LARGE SCALE GENOMIC DNA]</scope>
    <source>
        <strain>ATCC BAA-245 / DSM 16553 / LMG 16656 / NCTC 13227 / J2315 / CF5610</strain>
    </source>
</reference>
<feature type="chain" id="PRO_1000143232" description="Small ribosomal subunit protein uS17">
    <location>
        <begin position="1"/>
        <end position="90"/>
    </location>
</feature>
<organism>
    <name type="scientific">Burkholderia cenocepacia (strain ATCC BAA-245 / DSM 16553 / LMG 16656 / NCTC 13227 / J2315 / CF5610)</name>
    <name type="common">Burkholderia cepacia (strain J2315)</name>
    <dbReference type="NCBI Taxonomy" id="216591"/>
    <lineage>
        <taxon>Bacteria</taxon>
        <taxon>Pseudomonadati</taxon>
        <taxon>Pseudomonadota</taxon>
        <taxon>Betaproteobacteria</taxon>
        <taxon>Burkholderiales</taxon>
        <taxon>Burkholderiaceae</taxon>
        <taxon>Burkholderia</taxon>
        <taxon>Burkholderia cepacia complex</taxon>
    </lineage>
</organism>
<proteinExistence type="inferred from homology"/>
<evidence type="ECO:0000255" key="1">
    <source>
        <dbReference type="HAMAP-Rule" id="MF_01345"/>
    </source>
</evidence>
<evidence type="ECO:0000305" key="2"/>
<gene>
    <name evidence="1" type="primary">rpsQ</name>
    <name type="ordered locus">BceJ2315_02460</name>
    <name type="ORF">BCAL0243</name>
</gene>
<keyword id="KW-0687">Ribonucleoprotein</keyword>
<keyword id="KW-0689">Ribosomal protein</keyword>
<keyword id="KW-0694">RNA-binding</keyword>
<keyword id="KW-0699">rRNA-binding</keyword>
<dbReference type="EMBL" id="AM747720">
    <property type="protein sequence ID" value="CAR50554.1"/>
    <property type="molecule type" value="Genomic_DNA"/>
</dbReference>
<dbReference type="RefSeq" id="WP_006477189.1">
    <property type="nucleotide sequence ID" value="NC_011000.1"/>
</dbReference>
<dbReference type="SMR" id="B4E5C9"/>
<dbReference type="GeneID" id="93193442"/>
<dbReference type="KEGG" id="bcj:BCAL0243"/>
<dbReference type="eggNOG" id="COG0186">
    <property type="taxonomic scope" value="Bacteria"/>
</dbReference>
<dbReference type="HOGENOM" id="CLU_073626_1_1_4"/>
<dbReference type="BioCyc" id="BCEN216591:G1G1V-286-MONOMER"/>
<dbReference type="Proteomes" id="UP000001035">
    <property type="component" value="Chromosome 1"/>
</dbReference>
<dbReference type="GO" id="GO:0022627">
    <property type="term" value="C:cytosolic small ribosomal subunit"/>
    <property type="evidence" value="ECO:0007669"/>
    <property type="project" value="TreeGrafter"/>
</dbReference>
<dbReference type="GO" id="GO:0019843">
    <property type="term" value="F:rRNA binding"/>
    <property type="evidence" value="ECO:0007669"/>
    <property type="project" value="UniProtKB-UniRule"/>
</dbReference>
<dbReference type="GO" id="GO:0003735">
    <property type="term" value="F:structural constituent of ribosome"/>
    <property type="evidence" value="ECO:0007669"/>
    <property type="project" value="InterPro"/>
</dbReference>
<dbReference type="GO" id="GO:0006412">
    <property type="term" value="P:translation"/>
    <property type="evidence" value="ECO:0007669"/>
    <property type="project" value="UniProtKB-UniRule"/>
</dbReference>
<dbReference type="CDD" id="cd00364">
    <property type="entry name" value="Ribosomal_uS17"/>
    <property type="match status" value="1"/>
</dbReference>
<dbReference type="Gene3D" id="2.40.50.140">
    <property type="entry name" value="Nucleic acid-binding proteins"/>
    <property type="match status" value="1"/>
</dbReference>
<dbReference type="HAMAP" id="MF_01345_B">
    <property type="entry name" value="Ribosomal_uS17_B"/>
    <property type="match status" value="1"/>
</dbReference>
<dbReference type="InterPro" id="IPR012340">
    <property type="entry name" value="NA-bd_OB-fold"/>
</dbReference>
<dbReference type="InterPro" id="IPR000266">
    <property type="entry name" value="Ribosomal_uS17"/>
</dbReference>
<dbReference type="InterPro" id="IPR019984">
    <property type="entry name" value="Ribosomal_uS17_bact/chlr"/>
</dbReference>
<dbReference type="InterPro" id="IPR019979">
    <property type="entry name" value="Ribosomal_uS17_CS"/>
</dbReference>
<dbReference type="NCBIfam" id="NF004123">
    <property type="entry name" value="PRK05610.1"/>
    <property type="match status" value="1"/>
</dbReference>
<dbReference type="NCBIfam" id="TIGR03635">
    <property type="entry name" value="uS17_bact"/>
    <property type="match status" value="1"/>
</dbReference>
<dbReference type="PANTHER" id="PTHR10744">
    <property type="entry name" value="40S RIBOSOMAL PROTEIN S11 FAMILY MEMBER"/>
    <property type="match status" value="1"/>
</dbReference>
<dbReference type="PANTHER" id="PTHR10744:SF1">
    <property type="entry name" value="SMALL RIBOSOMAL SUBUNIT PROTEIN US17M"/>
    <property type="match status" value="1"/>
</dbReference>
<dbReference type="Pfam" id="PF00366">
    <property type="entry name" value="Ribosomal_S17"/>
    <property type="match status" value="1"/>
</dbReference>
<dbReference type="PRINTS" id="PR00973">
    <property type="entry name" value="RIBOSOMALS17"/>
</dbReference>
<dbReference type="SUPFAM" id="SSF50249">
    <property type="entry name" value="Nucleic acid-binding proteins"/>
    <property type="match status" value="1"/>
</dbReference>
<dbReference type="PROSITE" id="PS00056">
    <property type="entry name" value="RIBOSOMAL_S17"/>
    <property type="match status" value="1"/>
</dbReference>
<comment type="function">
    <text evidence="1">One of the primary rRNA binding proteins, it binds specifically to the 5'-end of 16S ribosomal RNA.</text>
</comment>
<comment type="subunit">
    <text evidence="1">Part of the 30S ribosomal subunit.</text>
</comment>
<comment type="similarity">
    <text evidence="1">Belongs to the universal ribosomal protein uS17 family.</text>
</comment>